<feature type="chain" id="PRO_0000136257" description="Histidine--tRNA ligase">
    <location>
        <begin position="1"/>
        <end position="424"/>
    </location>
</feature>
<keyword id="KW-0030">Aminoacyl-tRNA synthetase</keyword>
<keyword id="KW-0067">ATP-binding</keyword>
<keyword id="KW-0963">Cytoplasm</keyword>
<keyword id="KW-0436">Ligase</keyword>
<keyword id="KW-0547">Nucleotide-binding</keyword>
<keyword id="KW-0648">Protein biosynthesis</keyword>
<keyword id="KW-1185">Reference proteome</keyword>
<reference key="1">
    <citation type="journal article" date="2005" name="J. Bacteriol.">
        <title>Insights on evolution of virulence and resistance from the complete genome analysis of an early methicillin-resistant Staphylococcus aureus strain and a biofilm-producing methicillin-resistant Staphylococcus epidermidis strain.</title>
        <authorList>
            <person name="Gill S.R."/>
            <person name="Fouts D.E."/>
            <person name="Archer G.L."/>
            <person name="Mongodin E.F."/>
            <person name="DeBoy R.T."/>
            <person name="Ravel J."/>
            <person name="Paulsen I.T."/>
            <person name="Kolonay J.F."/>
            <person name="Brinkac L.M."/>
            <person name="Beanan M.J."/>
            <person name="Dodson R.J."/>
            <person name="Daugherty S.C."/>
            <person name="Madupu R."/>
            <person name="Angiuoli S.V."/>
            <person name="Durkin A.S."/>
            <person name="Haft D.H."/>
            <person name="Vamathevan J.J."/>
            <person name="Khouri H."/>
            <person name="Utterback T.R."/>
            <person name="Lee C."/>
            <person name="Dimitrov G."/>
            <person name="Jiang L."/>
            <person name="Qin H."/>
            <person name="Weidman J."/>
            <person name="Tran K."/>
            <person name="Kang K.H."/>
            <person name="Hance I.R."/>
            <person name="Nelson K.E."/>
            <person name="Fraser C.M."/>
        </authorList>
    </citation>
    <scope>NUCLEOTIDE SEQUENCE [LARGE SCALE GENOMIC DNA]</scope>
    <source>
        <strain>ATCC 35984 / DSM 28319 / BCRC 17069 / CCUG 31568 / BM 3577 / RP62A</strain>
    </source>
</reference>
<accession>Q5HNS1</accession>
<organism>
    <name type="scientific">Staphylococcus epidermidis (strain ATCC 35984 / DSM 28319 / BCRC 17069 / CCUG 31568 / BM 3577 / RP62A)</name>
    <dbReference type="NCBI Taxonomy" id="176279"/>
    <lineage>
        <taxon>Bacteria</taxon>
        <taxon>Bacillati</taxon>
        <taxon>Bacillota</taxon>
        <taxon>Bacilli</taxon>
        <taxon>Bacillales</taxon>
        <taxon>Staphylococcaceae</taxon>
        <taxon>Staphylococcus</taxon>
    </lineage>
</organism>
<proteinExistence type="inferred from homology"/>
<protein>
    <recommendedName>
        <fullName evidence="1">Histidine--tRNA ligase</fullName>
        <ecNumber evidence="1">6.1.1.21</ecNumber>
    </recommendedName>
    <alternativeName>
        <fullName evidence="1">Histidyl-tRNA synthetase</fullName>
        <shortName evidence="1">HisRS</shortName>
    </alternativeName>
</protein>
<evidence type="ECO:0000255" key="1">
    <source>
        <dbReference type="HAMAP-Rule" id="MF_00127"/>
    </source>
</evidence>
<name>SYH_STAEQ</name>
<sequence>MIKMPRGTQDILPQDSAKWRYIENRLHTLMELYNYKEIRTPIFESTELFARGVGDSTDVVQKEMYTFKDKGDRSLTLRPEGTAAVVRSYIEHKMQGEPNQPIKLYYNGPMFRYERKQKGRYRQFNQFGVEAIGAENPSIDAEILAMVMHIYESFGLKHLKLVINSIGDSESRKEYNEALVKHFEPVIDTFCSDCQSRLHTNPMRILDCKIDRDKEAVKNAPRITDYLNNDSKSYYEQVKLHLDNLNISYVEDPNLVRGLDYYTHTAFELMIDNPEYDGAITTLCGGGRYNGLLQLLDGPDETGIGFALSIERLLMALDEEGISLDVSEDFDLFVVTMGEDADRYAVKLINDLRRNGIKVDKDYLNRKIKGQMKQADRLNAKYTVVIGDQELENNEIGVKNMISGESENVQLDELVNYFKSRKEV</sequence>
<gene>
    <name evidence="1" type="primary">hisS</name>
    <name type="ordered locus">SERP1193</name>
</gene>
<comment type="catalytic activity">
    <reaction evidence="1">
        <text>tRNA(His) + L-histidine + ATP = L-histidyl-tRNA(His) + AMP + diphosphate + H(+)</text>
        <dbReference type="Rhea" id="RHEA:17313"/>
        <dbReference type="Rhea" id="RHEA-COMP:9665"/>
        <dbReference type="Rhea" id="RHEA-COMP:9689"/>
        <dbReference type="ChEBI" id="CHEBI:15378"/>
        <dbReference type="ChEBI" id="CHEBI:30616"/>
        <dbReference type="ChEBI" id="CHEBI:33019"/>
        <dbReference type="ChEBI" id="CHEBI:57595"/>
        <dbReference type="ChEBI" id="CHEBI:78442"/>
        <dbReference type="ChEBI" id="CHEBI:78527"/>
        <dbReference type="ChEBI" id="CHEBI:456215"/>
        <dbReference type="EC" id="6.1.1.21"/>
    </reaction>
</comment>
<comment type="subunit">
    <text evidence="1">Homodimer.</text>
</comment>
<comment type="subcellular location">
    <subcellularLocation>
        <location evidence="1">Cytoplasm</location>
    </subcellularLocation>
</comment>
<comment type="similarity">
    <text evidence="1">Belongs to the class-II aminoacyl-tRNA synthetase family.</text>
</comment>
<dbReference type="EC" id="6.1.1.21" evidence="1"/>
<dbReference type="EMBL" id="CP000029">
    <property type="protein sequence ID" value="AAW54572.1"/>
    <property type="molecule type" value="Genomic_DNA"/>
</dbReference>
<dbReference type="RefSeq" id="WP_001830876.1">
    <property type="nucleotide sequence ID" value="NC_002976.3"/>
</dbReference>
<dbReference type="SMR" id="Q5HNS1"/>
<dbReference type="STRING" id="176279.SERP1193"/>
<dbReference type="GeneID" id="50018571"/>
<dbReference type="KEGG" id="ser:SERP1193"/>
<dbReference type="eggNOG" id="COG0124">
    <property type="taxonomic scope" value="Bacteria"/>
</dbReference>
<dbReference type="HOGENOM" id="CLU_025113_1_1_9"/>
<dbReference type="Proteomes" id="UP000000531">
    <property type="component" value="Chromosome"/>
</dbReference>
<dbReference type="GO" id="GO:0005737">
    <property type="term" value="C:cytoplasm"/>
    <property type="evidence" value="ECO:0007669"/>
    <property type="project" value="UniProtKB-SubCell"/>
</dbReference>
<dbReference type="GO" id="GO:0005524">
    <property type="term" value="F:ATP binding"/>
    <property type="evidence" value="ECO:0007669"/>
    <property type="project" value="UniProtKB-UniRule"/>
</dbReference>
<dbReference type="GO" id="GO:0140096">
    <property type="term" value="F:catalytic activity, acting on a protein"/>
    <property type="evidence" value="ECO:0007669"/>
    <property type="project" value="UniProtKB-ARBA"/>
</dbReference>
<dbReference type="GO" id="GO:0004821">
    <property type="term" value="F:histidine-tRNA ligase activity"/>
    <property type="evidence" value="ECO:0007669"/>
    <property type="project" value="UniProtKB-UniRule"/>
</dbReference>
<dbReference type="GO" id="GO:0016740">
    <property type="term" value="F:transferase activity"/>
    <property type="evidence" value="ECO:0007669"/>
    <property type="project" value="UniProtKB-ARBA"/>
</dbReference>
<dbReference type="GO" id="GO:0006427">
    <property type="term" value="P:histidyl-tRNA aminoacylation"/>
    <property type="evidence" value="ECO:0007669"/>
    <property type="project" value="UniProtKB-UniRule"/>
</dbReference>
<dbReference type="CDD" id="cd00773">
    <property type="entry name" value="HisRS-like_core"/>
    <property type="match status" value="1"/>
</dbReference>
<dbReference type="CDD" id="cd00859">
    <property type="entry name" value="HisRS_anticodon"/>
    <property type="match status" value="1"/>
</dbReference>
<dbReference type="FunFam" id="3.30.930.10:FF:000005">
    <property type="entry name" value="Histidine--tRNA ligase"/>
    <property type="match status" value="1"/>
</dbReference>
<dbReference type="Gene3D" id="3.40.50.800">
    <property type="entry name" value="Anticodon-binding domain"/>
    <property type="match status" value="1"/>
</dbReference>
<dbReference type="Gene3D" id="3.30.930.10">
    <property type="entry name" value="Bira Bifunctional Protein, Domain 2"/>
    <property type="match status" value="1"/>
</dbReference>
<dbReference type="HAMAP" id="MF_00127">
    <property type="entry name" value="His_tRNA_synth"/>
    <property type="match status" value="1"/>
</dbReference>
<dbReference type="InterPro" id="IPR006195">
    <property type="entry name" value="aa-tRNA-synth_II"/>
</dbReference>
<dbReference type="InterPro" id="IPR045864">
    <property type="entry name" value="aa-tRNA-synth_II/BPL/LPL"/>
</dbReference>
<dbReference type="InterPro" id="IPR004154">
    <property type="entry name" value="Anticodon-bd"/>
</dbReference>
<dbReference type="InterPro" id="IPR036621">
    <property type="entry name" value="Anticodon-bd_dom_sf"/>
</dbReference>
<dbReference type="InterPro" id="IPR015807">
    <property type="entry name" value="His-tRNA-ligase"/>
</dbReference>
<dbReference type="InterPro" id="IPR041715">
    <property type="entry name" value="HisRS-like_core"/>
</dbReference>
<dbReference type="InterPro" id="IPR004516">
    <property type="entry name" value="HisRS/HisZ"/>
</dbReference>
<dbReference type="InterPro" id="IPR033656">
    <property type="entry name" value="HisRS_anticodon"/>
</dbReference>
<dbReference type="NCBIfam" id="TIGR00442">
    <property type="entry name" value="hisS"/>
    <property type="match status" value="1"/>
</dbReference>
<dbReference type="PANTHER" id="PTHR43707:SF1">
    <property type="entry name" value="HISTIDINE--TRNA LIGASE, MITOCHONDRIAL-RELATED"/>
    <property type="match status" value="1"/>
</dbReference>
<dbReference type="PANTHER" id="PTHR43707">
    <property type="entry name" value="HISTIDYL-TRNA SYNTHETASE"/>
    <property type="match status" value="1"/>
</dbReference>
<dbReference type="Pfam" id="PF03129">
    <property type="entry name" value="HGTP_anticodon"/>
    <property type="match status" value="1"/>
</dbReference>
<dbReference type="Pfam" id="PF13393">
    <property type="entry name" value="tRNA-synt_His"/>
    <property type="match status" value="1"/>
</dbReference>
<dbReference type="PIRSF" id="PIRSF001549">
    <property type="entry name" value="His-tRNA_synth"/>
    <property type="match status" value="1"/>
</dbReference>
<dbReference type="SUPFAM" id="SSF52954">
    <property type="entry name" value="Class II aaRS ABD-related"/>
    <property type="match status" value="1"/>
</dbReference>
<dbReference type="SUPFAM" id="SSF55681">
    <property type="entry name" value="Class II aaRS and biotin synthetases"/>
    <property type="match status" value="1"/>
</dbReference>
<dbReference type="PROSITE" id="PS50862">
    <property type="entry name" value="AA_TRNA_LIGASE_II"/>
    <property type="match status" value="1"/>
</dbReference>